<feature type="chain" id="PRO_0000343538" description="Small ribosomal subunit protein mS23">
    <location>
        <begin position="1"/>
        <end position="277"/>
    </location>
</feature>
<feature type="region of interest" description="Disordered" evidence="2">
    <location>
        <begin position="48"/>
        <end position="85"/>
    </location>
</feature>
<feature type="region of interest" description="Disordered" evidence="2">
    <location>
        <begin position="232"/>
        <end position="277"/>
    </location>
</feature>
<feature type="compositionally biased region" description="Acidic residues" evidence="2">
    <location>
        <begin position="244"/>
        <end position="269"/>
    </location>
</feature>
<accession>A6R7H2</accession>
<gene>
    <name type="primary">RSM25</name>
    <name type="ORF">HCAG_05580</name>
</gene>
<keyword id="KW-0496">Mitochondrion</keyword>
<keyword id="KW-1185">Reference proteome</keyword>
<keyword id="KW-0687">Ribonucleoprotein</keyword>
<keyword id="KW-0689">Ribosomal protein</keyword>
<reference key="1">
    <citation type="journal article" date="2009" name="Genome Res.">
        <title>Comparative genomic analyses of the human fungal pathogens Coccidioides and their relatives.</title>
        <authorList>
            <person name="Sharpton T.J."/>
            <person name="Stajich J.E."/>
            <person name="Rounsley S.D."/>
            <person name="Gardner M.J."/>
            <person name="Wortman J.R."/>
            <person name="Jordar V.S."/>
            <person name="Maiti R."/>
            <person name="Kodira C.D."/>
            <person name="Neafsey D.E."/>
            <person name="Zeng Q."/>
            <person name="Hung C.-Y."/>
            <person name="McMahan C."/>
            <person name="Muszewska A."/>
            <person name="Grynberg M."/>
            <person name="Mandel M.A."/>
            <person name="Kellner E.M."/>
            <person name="Barker B.M."/>
            <person name="Galgiani J.N."/>
            <person name="Orbach M.J."/>
            <person name="Kirkland T.N."/>
            <person name="Cole G.T."/>
            <person name="Henn M.R."/>
            <person name="Birren B.W."/>
            <person name="Taylor J.W."/>
        </authorList>
    </citation>
    <scope>NUCLEOTIDE SEQUENCE [LARGE SCALE GENOMIC DNA]</scope>
    <source>
        <strain>NAm1 / WU24</strain>
    </source>
</reference>
<protein>
    <recommendedName>
        <fullName evidence="3">Small ribosomal subunit protein mS23</fullName>
    </recommendedName>
    <alternativeName>
        <fullName>37S ribosomal protein S25, mitochondrial</fullName>
    </alternativeName>
</protein>
<dbReference type="EMBL" id="CH476659">
    <property type="protein sequence ID" value="EDN09081.1"/>
    <property type="molecule type" value="Genomic_DNA"/>
</dbReference>
<dbReference type="SMR" id="A6R7H2"/>
<dbReference type="STRING" id="339724.A6R7H2"/>
<dbReference type="KEGG" id="aje:HCAG_05580"/>
<dbReference type="VEuPathDB" id="FungiDB:HCAG_05580"/>
<dbReference type="HOGENOM" id="CLU_081350_0_0_1"/>
<dbReference type="OMA" id="ENWKIWA"/>
<dbReference type="OrthoDB" id="3228at299071"/>
<dbReference type="Proteomes" id="UP000009297">
    <property type="component" value="Unassembled WGS sequence"/>
</dbReference>
<dbReference type="GO" id="GO:0005763">
    <property type="term" value="C:mitochondrial small ribosomal subunit"/>
    <property type="evidence" value="ECO:0007669"/>
    <property type="project" value="InterPro"/>
</dbReference>
<dbReference type="GO" id="GO:0003735">
    <property type="term" value="F:structural constituent of ribosome"/>
    <property type="evidence" value="ECO:0007669"/>
    <property type="project" value="InterPro"/>
</dbReference>
<dbReference type="InterPro" id="IPR016939">
    <property type="entry name" value="Ribosomal_mS23_fun"/>
</dbReference>
<dbReference type="PANTHER" id="PTHR37799">
    <property type="entry name" value="37S RIBOSOMAL PROTEIN S25, MITOCHONDRIAL"/>
    <property type="match status" value="1"/>
</dbReference>
<dbReference type="PANTHER" id="PTHR37799:SF1">
    <property type="entry name" value="SMALL RIBOSOMAL SUBUNIT PROTEIN MS23"/>
    <property type="match status" value="1"/>
</dbReference>
<dbReference type="Pfam" id="PF13741">
    <property type="entry name" value="MRP-S25"/>
    <property type="match status" value="1"/>
</dbReference>
<dbReference type="PIRSF" id="PIRSF029764">
    <property type="entry name" value="RSM25"/>
    <property type="match status" value="1"/>
</dbReference>
<organism>
    <name type="scientific">Ajellomyces capsulatus (strain NAm1 / WU24)</name>
    <name type="common">Darling's disease fungus</name>
    <name type="synonym">Histoplasma capsulatum</name>
    <dbReference type="NCBI Taxonomy" id="2059318"/>
    <lineage>
        <taxon>Eukaryota</taxon>
        <taxon>Fungi</taxon>
        <taxon>Dikarya</taxon>
        <taxon>Ascomycota</taxon>
        <taxon>Pezizomycotina</taxon>
        <taxon>Eurotiomycetes</taxon>
        <taxon>Eurotiomycetidae</taxon>
        <taxon>Onygenales</taxon>
        <taxon>Ajellomycetaceae</taxon>
        <taxon>Histoplasma</taxon>
    </lineage>
</organism>
<comment type="subunit">
    <text evidence="1">Component of the mitochondrial small ribosomal subunit.</text>
</comment>
<comment type="subcellular location">
    <subcellularLocation>
        <location evidence="1">Mitochondrion</location>
    </subcellularLocation>
</comment>
<comment type="similarity">
    <text evidence="3">Belongs to the mitochondrion-specific ribosomal protein mS23 family.</text>
</comment>
<sequence>MGRYNLTALRVRRTALATTQCGKPGTRQPWLDVLADIPPASILVRNQAPSHPVVKQRMRTVPGKSKPQLEIKSSAGRKQTSKKPSRIFQPKEIRYEEDQLRKEFFRDHPWELARPRVVLENDGNDHRRYNWQNIQQPGKKLDGESVVQRQLYLLNNVPDMSKGAAYEIARREFYQLRLQEDVERRVAQEEALATGAYFGPDMHTVGMELENQEYEKWKVWAEGENQAMEQRLAAFTGSTGPTEESGESEDEIPLIEEEDAIGASEESETEAPSGPPI</sequence>
<name>RT25_AJECN</name>
<proteinExistence type="inferred from homology"/>
<evidence type="ECO:0000250" key="1"/>
<evidence type="ECO:0000256" key="2">
    <source>
        <dbReference type="SAM" id="MobiDB-lite"/>
    </source>
</evidence>
<evidence type="ECO:0000305" key="3"/>